<organism>
    <name type="scientific">Xenopus laevis</name>
    <name type="common">African clawed frog</name>
    <dbReference type="NCBI Taxonomy" id="8355"/>
    <lineage>
        <taxon>Eukaryota</taxon>
        <taxon>Metazoa</taxon>
        <taxon>Chordata</taxon>
        <taxon>Craniata</taxon>
        <taxon>Vertebrata</taxon>
        <taxon>Euteleostomi</taxon>
        <taxon>Amphibia</taxon>
        <taxon>Batrachia</taxon>
        <taxon>Anura</taxon>
        <taxon>Pipoidea</taxon>
        <taxon>Pipidae</taxon>
        <taxon>Xenopodinae</taxon>
        <taxon>Xenopus</taxon>
        <taxon>Xenopus</taxon>
    </lineage>
</organism>
<reference key="1">
    <citation type="journal article" date="1993" name="Development">
        <title>Xwnt-11: a maternally expressed Xenopus wnt gene.</title>
        <authorList>
            <person name="Ku M."/>
            <person name="Melton D.A."/>
        </authorList>
    </citation>
    <scope>NUCLEOTIDE SEQUENCE [MRNA]</scope>
    <scope>FUNCTION</scope>
    <scope>TISSUE SPECIFICITY</scope>
    <scope>DEVELOPMENTAL STAGE</scope>
    <source>
        <tissue>Oocyte</tissue>
    </source>
</reference>
<reference key="2">
    <citation type="submission" date="2004-10" db="EMBL/GenBank/DDBJ databases">
        <authorList>
            <consortium name="NIH - Xenopus Gene Collection (XGC) project"/>
        </authorList>
    </citation>
    <scope>NUCLEOTIDE SEQUENCE [LARGE SCALE MRNA]</scope>
    <source>
        <tissue>Gastrula</tissue>
    </source>
</reference>
<reference key="3">
    <citation type="journal article" date="1995" name="Development">
        <title>Two distinct pathways for the localization of RNAs at the vegetal cortex in Xenopus oocytes.</title>
        <authorList>
            <person name="Kloc M."/>
            <person name="Etkin L.D."/>
        </authorList>
    </citation>
    <scope>TISSUE SPECIFICITY</scope>
</reference>
<reference key="4">
    <citation type="journal article" date="1995" name="Mol. Cell. Biol.">
        <title>Identification of distinct classes and functional domains of Wnts through expression of wild-type and chimeric proteins in Xenopus embryos.</title>
        <authorList>
            <person name="Du S.J."/>
            <person name="Purcell S.M."/>
            <person name="Christian J.L."/>
            <person name="McGrew L.L."/>
            <person name="Moon R.T."/>
        </authorList>
    </citation>
    <scope>FUNCTION</scope>
</reference>
<reference key="5">
    <citation type="journal article" date="1996" name="J. Cell Biol.">
        <title>Activities of the Wnt-1 class of secreted signaling factors are antagonized by the Wnt-5A class and by a dominant negative cadherin in early Xenopus development.</title>
        <authorList>
            <person name="Torres M.A."/>
            <person name="Yang-Snyder J.A."/>
            <person name="Purcell S.M."/>
            <person name="DeMarais A.A."/>
            <person name="McGrew L.L."/>
            <person name="Moon R.T."/>
        </authorList>
    </citation>
    <scope>FUNCTION</scope>
</reference>
<reference key="6">
    <citation type="journal article" date="1999" name="Dev. Biol.">
        <title>Spatially regulated translation in embryos: asymmetric expression of maternal Wnt-11 along the dorsal-ventral axis in Xenopus.</title>
        <authorList>
            <person name="Schroeder K.E."/>
            <person name="Condic M.L."/>
            <person name="Eisenberg L.M."/>
            <person name="Yost H.J."/>
        </authorList>
    </citation>
    <scope>TISSUE SPECIFICITY</scope>
</reference>
<reference key="7">
    <citation type="journal article" date="2000" name="Development">
        <title>The putative Wnt receptor Xenopus frizzled-7 functions upstream of beta-catenin in vertebrate dorso-ventral mesoderm patterning.</title>
        <authorList>
            <person name="Sumanas S."/>
            <person name="Strege P."/>
            <person name="Heasman J."/>
            <person name="Ekker S.C."/>
        </authorList>
    </citation>
    <scope>FUNCTION</scope>
</reference>
<reference key="8">
    <citation type="journal article" date="2000" name="Development">
        <title>Xwnt11 is a target of Xenopus Brachyury: regulation of gastrulation movements via Dishevelled, but not through the canonical Wnt pathway.</title>
        <authorList>
            <person name="Tada M."/>
            <person name="Smith J.C."/>
        </authorList>
    </citation>
    <scope>FUNCTION</scope>
    <scope>TISSUE SPECIFICITY</scope>
    <scope>INDUCTION</scope>
</reference>
<reference key="9">
    <citation type="journal article" date="2000" name="Development">
        <title>Role of frizzled 7 in the regulation of convergent extension movements during gastrulation in Xenopus laevis.</title>
        <authorList>
            <person name="Djiane A."/>
            <person name="Riou J.-F."/>
            <person name="Umbhauer M."/>
            <person name="Boucaut J.-C."/>
            <person name="Shi D.-L."/>
        </authorList>
    </citation>
    <scope>FUNCTION</scope>
    <scope>INTERACTION WITH FZD7</scope>
    <scope>SUBCELLULAR LOCATION</scope>
</reference>
<reference key="10">
    <citation type="journal article" date="2000" name="Mech. Dev.">
        <title>Xotx1 maternal transcripts are vegetally localized in Xenopus laevis oocytes.</title>
        <authorList>
            <person name="Pannese M."/>
            <person name="Cagliani R."/>
            <person name="Pardini C.L."/>
            <person name="Boncinelli E."/>
        </authorList>
    </citation>
    <scope>TISSUE SPECIFICITY</scope>
</reference>
<reference key="11">
    <citation type="journal article" date="2000" name="Mech. Dev.">
        <title>A screen for targets of the Xenopus T-box gene Xbra.</title>
        <authorList>
            <person name="Saka Y."/>
            <person name="Tada M."/>
            <person name="Smith J.C."/>
        </authorList>
    </citation>
    <scope>INDUCTION</scope>
</reference>
<reference key="12">
    <citation type="journal article" date="2000" name="Philos. Trans. R. Soc. Lond., B, Biol. Sci.">
        <title>Xwnt11 and the regulation of gastrulation in Xenopus.</title>
        <authorList>
            <person name="Smith J.C."/>
            <person name="Conlon F.L."/>
            <person name="Saka Y."/>
            <person name="Tada M."/>
        </authorList>
    </citation>
    <scope>FUNCTION</scope>
    <scope>TISSUE SPECIFICITY</scope>
    <scope>INDUCTION</scope>
</reference>
<reference key="13">
    <citation type="journal article" date="2001" name="Dev. Biol.">
        <title>Vegetal localization of maternal mRNAs is disrupted by VegT depletion.</title>
        <authorList>
            <person name="Heasman J."/>
            <person name="Wessely O."/>
            <person name="Langland R."/>
            <person name="Craig E.J."/>
            <person name="Kessler D.S."/>
        </authorList>
    </citation>
    <scope>TISSUE SPECIFICITY</scope>
</reference>
<reference key="14">
    <citation type="journal article" date="2001" name="Genes Dev.">
        <title>Wnt antagonism initiates cardiogenesis in Xenopus laevis.</title>
        <authorList>
            <person name="Schneider V.A."/>
            <person name="Mercola M."/>
        </authorList>
    </citation>
    <scope>LACK OF FUNCTION IN HEART INDUCTION</scope>
</reference>
<reference key="15">
    <citation type="journal article" date="2002" name="Nature">
        <title>Wnt-11 activation of a non-canonical Wnt signalling pathway is required for cardiogenesis.</title>
        <authorList>
            <person name="Pandur P."/>
            <person name="Lasche M."/>
            <person name="Eisenberg L.M."/>
            <person name="Kuhl M."/>
        </authorList>
    </citation>
    <scope>FUNCTION</scope>
</reference>
<reference key="16">
    <citation type="journal article" date="2003" name="Biochemistry (Mosc.)">
        <title>Transition of Xwnt-11 mRNA from inactive form to polyribosomes in frogs during early embryogenesis.</title>
        <authorList>
            <person name="Shatilov D.V."/>
            <person name="Pshennikova E.S."/>
            <person name="Voronina A.S."/>
        </authorList>
    </citation>
    <scope>TISSUE SPECIFICITY</scope>
</reference>
<reference key="17">
    <citation type="journal article" date="2004" name="Nat. Cell Biol.">
        <title>Non-canonical Wnt signals are modulated by the Kaiso transcriptional repressor and p120-catenin.</title>
        <authorList>
            <person name="Kim S.-W."/>
            <person name="Park J.-I."/>
            <person name="Spring C.M."/>
            <person name="Sater A.K."/>
            <person name="Ji H."/>
            <person name="Otchere A.A."/>
            <person name="Daniel J.M."/>
            <person name="McCrea P.D."/>
        </authorList>
    </citation>
    <scope>FUNCTION</scope>
    <scope>TISSUE SPECIFICITY</scope>
    <scope>INDUCTION</scope>
</reference>
<reference key="18">
    <citation type="journal article" date="2005" name="Cell">
        <title>Maternal wnt11 activates the canonical wnt signaling pathway required for axis formation in Xenopus embryos.</title>
        <authorList>
            <person name="Tao Q."/>
            <person name="Yokota C."/>
            <person name="Puck H."/>
            <person name="Kofron M."/>
            <person name="Birsoy B."/>
            <person name="Yan D."/>
            <person name="Asashima M."/>
            <person name="Wylie C.C."/>
            <person name="Lin X."/>
            <person name="Heasman J."/>
        </authorList>
    </citation>
    <scope>FUNCTION</scope>
    <scope>INTERACTION WITH TDGF1</scope>
    <scope>TISSUE SPECIFICITY</scope>
</reference>
<reference key="19">
    <citation type="journal article" date="2005" name="Development">
        <title>Essential role of non-canonical Wnt signalling in neural crest migration.</title>
        <authorList>
            <person name="De Calisto J."/>
            <person name="Araya C."/>
            <person name="Marchant L."/>
            <person name="Riaz C.F."/>
            <person name="Mayor R."/>
        </authorList>
    </citation>
    <scope>FUNCTION</scope>
    <scope>TISSUE SPECIFICITY</scope>
</reference>
<reference key="20">
    <citation type="journal article" date="2005" name="Mech. Dev.">
        <title>Antagonistic interaction between IGF and Wnt/JNK signaling in convergent extension in Xenopus embryo.</title>
        <authorList>
            <person name="Carron C."/>
            <person name="Bourdelas A."/>
            <person name="Li H.Y."/>
            <person name="Boucaut J.C."/>
            <person name="Shi D.L."/>
        </authorList>
    </citation>
    <scope>FUNCTION</scope>
</reference>
<reference key="21">
    <citation type="journal article" date="2005" name="Mech. Dev.">
        <title>Role of crescent in convergent extension movements by modulating Wnt signaling in early Xenopus embryogenesis.</title>
        <authorList>
            <person name="Shibata M."/>
            <person name="Itoh M."/>
            <person name="Hikasa H."/>
            <person name="Taira S."/>
            <person name="Taira M."/>
        </authorList>
    </citation>
    <scope>FUNCTION</scope>
    <scope>INTERACTION WITH FRZB1; FRZB2 AND FZD7</scope>
    <scope>TISSUE SPECIFICITY</scope>
</reference>
<reference key="22">
    <citation type="journal article" date="2007" name="Development">
        <title>Wnt11/beta-catenin signaling in both oocytes and early embryos acts through LRP6-mediated regulation of axin.</title>
        <authorList>
            <person name="Kofron M."/>
            <person name="Birsoy B."/>
            <person name="Houston D."/>
            <person name="Tao Q."/>
            <person name="Wylie C."/>
            <person name="Heasman J."/>
        </authorList>
    </citation>
    <scope>FUNCTION</scope>
    <scope>INTERACTION WITH LRP6</scope>
</reference>
<reference key="23">
    <citation type="journal article" date="2007" name="Dev. Dyn.">
        <title>Census of vertebrate Wnt genes: isolation and developmental expression of Xenopus Wnt2, Wnt3, Wnt9a, Wnt9b, Wnt10a, and Wnt16.</title>
        <authorList>
            <person name="Garriock R.J."/>
            <person name="Warkman A.S."/>
            <person name="Meadows S.M."/>
            <person name="D'Agostino S."/>
            <person name="Krieg P.A."/>
        </authorList>
    </citation>
    <scope>NOMENCLATURE</scope>
</reference>
<reference key="24">
    <citation type="journal article" date="2007" name="Genes Cells">
        <title>Wnt11 stimulation induces polarized accumulation of Dishevelled at apical adherens junctions through Frizzled7.</title>
        <authorList>
            <person name="Yamanaka H."/>
            <person name="Nishida E."/>
        </authorList>
    </citation>
    <scope>FUNCTION</scope>
</reference>
<reference key="25">
    <citation type="journal article" date="2008" name="Development">
        <title>GATA transcription factors integrate Wnt signalling during heart development.</title>
        <authorList>
            <person name="Afouda B.A."/>
            <person name="Martin J."/>
            <person name="Liu F."/>
            <person name="Ciau-Uitz A."/>
            <person name="Patient R."/>
            <person name="Hoppler S."/>
        </authorList>
    </citation>
    <scope>FUNCTION</scope>
    <scope>INDUCTION</scope>
</reference>
<reference key="26">
    <citation type="journal article" date="2008" name="Development">
        <title>Wnt5a and Wnt11 interact in a maternal Dkk1-regulated fashion to activate both canonical and non-canonical signaling in Xenopus axis formation.</title>
        <authorList>
            <person name="Cha S.W."/>
            <person name="Tadjuidje E."/>
            <person name="Tao Q."/>
            <person name="Wylie C."/>
            <person name="Heasman J."/>
        </authorList>
    </citation>
    <scope>FUNCTION</scope>
    <scope>HOMODIMERIZATION</scope>
    <scope>IDENTIFICATION IN A COMPLEX WITH WNT5</scope>
    <scope>SUBCELLULAR LOCATION</scope>
</reference>
<reference key="27">
    <citation type="journal article" date="2008" name="Genes Dev.">
        <title>Sfrp5 coordinates foregut specification and morphogenesis by antagonizing both canonical and noncanonical Wnt11 signaling.</title>
        <authorList>
            <person name="Li Y."/>
            <person name="Rankin S.A."/>
            <person name="Sinner D."/>
            <person name="Kenny A.P."/>
            <person name="Krieg P.A."/>
            <person name="Zorn A.M."/>
        </authorList>
    </citation>
    <scope>FUNCTION</scope>
    <scope>TISSUE SPECIFICITY</scope>
</reference>
<reference key="28">
    <citation type="journal article" date="2008" name="J. Cell Biol.">
        <title>Ryk cooperates with Frizzled 7 to promote Wnt11-mediated endocytosis and is essential for Xenopus laevis convergent extension movements.</title>
        <authorList>
            <person name="Kim G.H."/>
            <person name="Her J.H."/>
            <person name="Han J.K."/>
        </authorList>
    </citation>
    <scope>FUNCTION</scope>
    <scope>INTERACTION WITH RYK</scope>
</reference>
<reference key="29">
    <citation type="journal article" date="2009" name="Curr. Biol.">
        <title>Wnt11/5a complex formation caused by tyrosine sulfation increases canonical signaling activity.</title>
        <authorList>
            <person name="Cha S.W."/>
            <person name="Tadjuidje E."/>
            <person name="White J."/>
            <person name="Wells J."/>
            <person name="Mayhew C."/>
            <person name="Wylie C."/>
            <person name="Heasman J."/>
        </authorList>
    </citation>
    <scope>FUNCTION</scope>
    <scope>SUBCELLULAR LOCATION</scope>
    <scope>IDENTIFICATION IN A COMPLEX WITH WNT5A</scope>
    <scope>GLYCOSYLATION AT ASN-88 AND ASN-299</scope>
    <scope>SULFATION AT TYR-274 AND TYR-281</scope>
    <scope>MUTAGENESIS OF ASN-88; TYR-274; TYR-281 AND ASN-299</scope>
</reference>
<reference key="30">
    <citation type="journal article" date="2009" name="Development">
        <title>Secreted Frizzled-related proteins enhance the diffusion of Wnt ligands and expand their signalling range.</title>
        <authorList>
            <person name="Mii Y."/>
            <person name="Taira M."/>
        </authorList>
    </citation>
    <scope>SUBCELLULAR LOCATION</scope>
</reference>
<reference key="31">
    <citation type="journal article" date="2010" name="Dev. Dyn.">
        <title>Xenopus Wnt11b is identified as a potential pronephric inducer.</title>
        <authorList>
            <person name="Tetelin S."/>
            <person name="Jones E.A."/>
        </authorList>
    </citation>
    <scope>FUNCTION</scope>
    <scope>TISSUE SPECIFICITY</scope>
</reference>
<reference key="32">
    <citation type="journal article" date="2002" name="Semin. Cell Dev. Biol.">
        <title>Non-canonical Wnt signaling in Xenopus: regulation of axis formation and gastrulation.</title>
        <authorList>
            <person name="Kuhl M."/>
        </authorList>
    </citation>
    <scope>REVIEW</scope>
</reference>
<reference key="33">
    <citation type="journal article" date="2008" name="Trends Cardiovasc. Med.">
        <title>Noncanonical Wnt11 signaling and cardiomyogenic differentiation.</title>
        <authorList>
            <person name="Flaherty M.P."/>
            <person name="Dawn B."/>
        </authorList>
    </citation>
    <scope>REVIEW</scope>
</reference>
<gene>
    <name type="primary">wnt11b</name>
    <name type="synonym">wnt-11</name>
    <name type="synonym">wnt11</name>
</gene>
<proteinExistence type="evidence at protein level"/>
<protein>
    <recommendedName>
        <fullName>Protein Wnt-11b</fullName>
    </recommendedName>
    <alternativeName>
        <fullName>Protein Wnt-11</fullName>
        <shortName>XWnt-11</shortName>
    </alternativeName>
</protein>
<accession>P49893</accession>
<accession>Q5U5D9</accession>
<dbReference type="EMBL" id="L23542">
    <property type="protein sequence ID" value="AAA19697.1"/>
    <property type="molecule type" value="mRNA"/>
</dbReference>
<dbReference type="EMBL" id="BC084745">
    <property type="protein sequence ID" value="AAH84745.1"/>
    <property type="molecule type" value="mRNA"/>
</dbReference>
<dbReference type="PIR" id="I51572">
    <property type="entry name" value="I51572"/>
</dbReference>
<dbReference type="RefSeq" id="NP_001084327.1">
    <property type="nucleotide sequence ID" value="NM_001090858.1"/>
</dbReference>
<dbReference type="SMR" id="P49893"/>
<dbReference type="IntAct" id="P49893">
    <property type="interactions" value="1"/>
</dbReference>
<dbReference type="GlyCosmos" id="P49893">
    <property type="glycosylation" value="4 sites, No reported glycans"/>
</dbReference>
<dbReference type="iPTMnet" id="P49893"/>
<dbReference type="DNASU" id="399441"/>
<dbReference type="GeneID" id="399441"/>
<dbReference type="KEGG" id="xla:399441"/>
<dbReference type="AGR" id="Xenbase:XB-GENE-6079153"/>
<dbReference type="CTD" id="399441"/>
<dbReference type="Xenbase" id="XB-GENE-6079153">
    <property type="gene designation" value="wnt11b.L"/>
</dbReference>
<dbReference type="OMA" id="CYVMCKK"/>
<dbReference type="OrthoDB" id="5945655at2759"/>
<dbReference type="Proteomes" id="UP000186698">
    <property type="component" value="Chromosome 8L"/>
</dbReference>
<dbReference type="Bgee" id="399441">
    <property type="expression patterns" value="Expressed in gastrula and 7 other cell types or tissues"/>
</dbReference>
<dbReference type="GO" id="GO:0062023">
    <property type="term" value="C:collagen-containing extracellular matrix"/>
    <property type="evidence" value="ECO:0000314"/>
    <property type="project" value="BHF-UCL"/>
</dbReference>
<dbReference type="GO" id="GO:0005737">
    <property type="term" value="C:cytoplasm"/>
    <property type="evidence" value="ECO:0000250"/>
    <property type="project" value="UniProtKB"/>
</dbReference>
<dbReference type="GO" id="GO:0005576">
    <property type="term" value="C:extracellular region"/>
    <property type="evidence" value="ECO:0000250"/>
    <property type="project" value="UniProtKB"/>
</dbReference>
<dbReference type="GO" id="GO:0005615">
    <property type="term" value="C:extracellular space"/>
    <property type="evidence" value="ECO:0000314"/>
    <property type="project" value="UniProtKB"/>
</dbReference>
<dbReference type="GO" id="GO:0005886">
    <property type="term" value="C:plasma membrane"/>
    <property type="evidence" value="ECO:0000353"/>
    <property type="project" value="UniProtKB"/>
</dbReference>
<dbReference type="GO" id="GO:0032991">
    <property type="term" value="C:protein-containing complex"/>
    <property type="evidence" value="ECO:0000353"/>
    <property type="project" value="UniProtKB"/>
</dbReference>
<dbReference type="GO" id="GO:0005125">
    <property type="term" value="F:cytokine activity"/>
    <property type="evidence" value="ECO:0000318"/>
    <property type="project" value="GO_Central"/>
</dbReference>
<dbReference type="GO" id="GO:0005109">
    <property type="term" value="F:frizzled binding"/>
    <property type="evidence" value="ECO:0000353"/>
    <property type="project" value="UniProtKB"/>
</dbReference>
<dbReference type="GO" id="GO:0019838">
    <property type="term" value="F:growth factor binding"/>
    <property type="evidence" value="ECO:0000353"/>
    <property type="project" value="UniProtKB"/>
</dbReference>
<dbReference type="GO" id="GO:0042803">
    <property type="term" value="F:protein homodimerization activity"/>
    <property type="evidence" value="ECO:0000314"/>
    <property type="project" value="UniProtKB"/>
</dbReference>
<dbReference type="GO" id="GO:0017147">
    <property type="term" value="F:Wnt-protein binding"/>
    <property type="evidence" value="ECO:0000353"/>
    <property type="project" value="UniProtKB"/>
</dbReference>
<dbReference type="GO" id="GO:0060070">
    <property type="term" value="P:canonical Wnt signaling pathway"/>
    <property type="evidence" value="ECO:0000315"/>
    <property type="project" value="UniProtKB"/>
</dbReference>
<dbReference type="GO" id="GO:0045165">
    <property type="term" value="P:cell fate commitment"/>
    <property type="evidence" value="ECO:0000318"/>
    <property type="project" value="GO_Central"/>
</dbReference>
<dbReference type="GO" id="GO:0042074">
    <property type="term" value="P:cell migration involved in gastrulation"/>
    <property type="evidence" value="ECO:0000315"/>
    <property type="project" value="UniProtKB"/>
</dbReference>
<dbReference type="GO" id="GO:0060027">
    <property type="term" value="P:convergent extension involved in gastrulation"/>
    <property type="evidence" value="ECO:0000315"/>
    <property type="project" value="UniProtKB"/>
</dbReference>
<dbReference type="GO" id="GO:0009950">
    <property type="term" value="P:dorsal/ventral axis specification"/>
    <property type="evidence" value="ECO:0000315"/>
    <property type="project" value="UniProtKB"/>
</dbReference>
<dbReference type="GO" id="GO:0006897">
    <property type="term" value="P:endocytosis"/>
    <property type="evidence" value="ECO:0000315"/>
    <property type="project" value="UniProtKB"/>
</dbReference>
<dbReference type="GO" id="GO:0060429">
    <property type="term" value="P:epithelium development"/>
    <property type="evidence" value="ECO:0000315"/>
    <property type="project" value="Xenbase"/>
</dbReference>
<dbReference type="GO" id="GO:0007369">
    <property type="term" value="P:gastrulation"/>
    <property type="evidence" value="ECO:0000315"/>
    <property type="project" value="Xenbase"/>
</dbReference>
<dbReference type="GO" id="GO:0007507">
    <property type="term" value="P:heart development"/>
    <property type="evidence" value="ECO:0000315"/>
    <property type="project" value="UniProtKB"/>
</dbReference>
<dbReference type="GO" id="GO:0060914">
    <property type="term" value="P:heart formation"/>
    <property type="evidence" value="ECO:0000315"/>
    <property type="project" value="UniProtKB"/>
</dbReference>
<dbReference type="GO" id="GO:0003315">
    <property type="term" value="P:heart rudiment formation"/>
    <property type="evidence" value="ECO:0000315"/>
    <property type="project" value="Xenbase"/>
</dbReference>
<dbReference type="GO" id="GO:0035556">
    <property type="term" value="P:intracellular signal transduction"/>
    <property type="evidence" value="ECO:0000250"/>
    <property type="project" value="UniProtKB"/>
</dbReference>
<dbReference type="GO" id="GO:0090090">
    <property type="term" value="P:negative regulation of canonical Wnt signaling pathway"/>
    <property type="evidence" value="ECO:0000250"/>
    <property type="project" value="UniProtKB"/>
</dbReference>
<dbReference type="GO" id="GO:0001755">
    <property type="term" value="P:neural crest cell migration"/>
    <property type="evidence" value="ECO:0000315"/>
    <property type="project" value="UniProtKB"/>
</dbReference>
<dbReference type="GO" id="GO:0061101">
    <property type="term" value="P:neuroendocrine cell differentiation"/>
    <property type="evidence" value="ECO:0000250"/>
    <property type="project" value="UniProtKB"/>
</dbReference>
<dbReference type="GO" id="GO:0030182">
    <property type="term" value="P:neuron differentiation"/>
    <property type="evidence" value="ECO:0000318"/>
    <property type="project" value="GO_Central"/>
</dbReference>
<dbReference type="GO" id="GO:0035567">
    <property type="term" value="P:non-canonical Wnt signaling pathway"/>
    <property type="evidence" value="ECO:0000315"/>
    <property type="project" value="UniProtKB"/>
</dbReference>
<dbReference type="GO" id="GO:0045893">
    <property type="term" value="P:positive regulation of DNA-templated transcription"/>
    <property type="evidence" value="ECO:0000250"/>
    <property type="project" value="UniProtKB"/>
</dbReference>
<dbReference type="GO" id="GO:0046330">
    <property type="term" value="P:positive regulation of JNK cascade"/>
    <property type="evidence" value="ECO:0000314"/>
    <property type="project" value="UniProtKB"/>
</dbReference>
<dbReference type="GO" id="GO:0048793">
    <property type="term" value="P:pronephros development"/>
    <property type="evidence" value="ECO:0000315"/>
    <property type="project" value="UniProtKB"/>
</dbReference>
<dbReference type="GO" id="GO:0062009">
    <property type="term" value="P:secondary palate development"/>
    <property type="evidence" value="ECO:0000250"/>
    <property type="project" value="UniProtKB"/>
</dbReference>
<dbReference type="GO" id="GO:0007165">
    <property type="term" value="P:signal transduction"/>
    <property type="evidence" value="ECO:0000250"/>
    <property type="project" value="UniProtKB"/>
</dbReference>
<dbReference type="GO" id="GO:0016055">
    <property type="term" value="P:Wnt signaling pathway"/>
    <property type="evidence" value="ECO:0000316"/>
    <property type="project" value="UniProtKB"/>
</dbReference>
<dbReference type="GO" id="GO:0060071">
    <property type="term" value="P:Wnt signaling pathway, planar cell polarity pathway"/>
    <property type="evidence" value="ECO:0000316"/>
    <property type="project" value="UniProtKB"/>
</dbReference>
<dbReference type="CDD" id="cd19343">
    <property type="entry name" value="Wnt_Wnt11"/>
    <property type="match status" value="1"/>
</dbReference>
<dbReference type="FunFam" id="3.30.2460.20:FF:000001">
    <property type="entry name" value="Wnt homolog"/>
    <property type="match status" value="1"/>
</dbReference>
<dbReference type="Gene3D" id="3.30.2460.20">
    <property type="match status" value="1"/>
</dbReference>
<dbReference type="InterPro" id="IPR005817">
    <property type="entry name" value="Wnt"/>
</dbReference>
<dbReference type="InterPro" id="IPR043158">
    <property type="entry name" value="Wnt_C"/>
</dbReference>
<dbReference type="InterPro" id="IPR018161">
    <property type="entry name" value="Wnt_CS"/>
</dbReference>
<dbReference type="PANTHER" id="PTHR12027:SF34">
    <property type="entry name" value="PROTEIN WNT"/>
    <property type="match status" value="1"/>
</dbReference>
<dbReference type="PANTHER" id="PTHR12027">
    <property type="entry name" value="WNT RELATED"/>
    <property type="match status" value="1"/>
</dbReference>
<dbReference type="Pfam" id="PF00110">
    <property type="entry name" value="wnt"/>
    <property type="match status" value="1"/>
</dbReference>
<dbReference type="PRINTS" id="PR01349">
    <property type="entry name" value="WNTPROTEIN"/>
</dbReference>
<dbReference type="SMART" id="SM00097">
    <property type="entry name" value="WNT1"/>
    <property type="match status" value="1"/>
</dbReference>
<dbReference type="PROSITE" id="PS00246">
    <property type="entry name" value="WNT1"/>
    <property type="match status" value="1"/>
</dbReference>
<name>WN11B_XENLA</name>
<evidence type="ECO:0000250" key="1">
    <source>
        <dbReference type="UniProtKB" id="P27467"/>
    </source>
</evidence>
<evidence type="ECO:0000250" key="2">
    <source>
        <dbReference type="UniProtKB" id="P28026"/>
    </source>
</evidence>
<evidence type="ECO:0000250" key="3">
    <source>
        <dbReference type="UniProtKB" id="P56704"/>
    </source>
</evidence>
<evidence type="ECO:0000255" key="4"/>
<evidence type="ECO:0000269" key="5">
    <source>
    </source>
</evidence>
<evidence type="ECO:0000269" key="6">
    <source>
    </source>
</evidence>
<evidence type="ECO:0000269" key="7">
    <source>
    </source>
</evidence>
<evidence type="ECO:0000269" key="8">
    <source>
    </source>
</evidence>
<evidence type="ECO:0000269" key="9">
    <source>
    </source>
</evidence>
<evidence type="ECO:0000269" key="10">
    <source>
    </source>
</evidence>
<evidence type="ECO:0000269" key="11">
    <source>
    </source>
</evidence>
<evidence type="ECO:0000269" key="12">
    <source>
    </source>
</evidence>
<evidence type="ECO:0000269" key="13">
    <source>
    </source>
</evidence>
<evidence type="ECO:0000269" key="14">
    <source>
    </source>
</evidence>
<evidence type="ECO:0000269" key="15">
    <source>
    </source>
</evidence>
<evidence type="ECO:0000269" key="16">
    <source>
    </source>
</evidence>
<evidence type="ECO:0000269" key="17">
    <source>
    </source>
</evidence>
<evidence type="ECO:0000269" key="18">
    <source>
    </source>
</evidence>
<evidence type="ECO:0000269" key="19">
    <source>
    </source>
</evidence>
<evidence type="ECO:0000269" key="20">
    <source>
    </source>
</evidence>
<evidence type="ECO:0000269" key="21">
    <source>
    </source>
</evidence>
<evidence type="ECO:0000269" key="22">
    <source>
    </source>
</evidence>
<evidence type="ECO:0000269" key="23">
    <source>
    </source>
</evidence>
<evidence type="ECO:0000269" key="24">
    <source>
    </source>
</evidence>
<evidence type="ECO:0000269" key="25">
    <source>
    </source>
</evidence>
<evidence type="ECO:0000269" key="26">
    <source>
    </source>
</evidence>
<evidence type="ECO:0000269" key="27">
    <source>
    </source>
</evidence>
<evidence type="ECO:0000269" key="28">
    <source>
    </source>
</evidence>
<evidence type="ECO:0000269" key="29">
    <source>
    </source>
</evidence>
<evidence type="ECO:0000269" key="30">
    <source>
    </source>
</evidence>
<evidence type="ECO:0000269" key="31">
    <source>
    </source>
</evidence>
<evidence type="ECO:0000269" key="32">
    <source>
    </source>
</evidence>
<evidence type="ECO:0000305" key="33"/>
<evidence type="ECO:0000305" key="34">
    <source>
    </source>
</evidence>
<evidence type="ECO:0000305" key="35">
    <source>
    </source>
</evidence>
<feature type="signal peptide" evidence="4">
    <location>
        <begin position="1"/>
        <end position="22"/>
    </location>
</feature>
<feature type="chain" id="PRO_0000041470" description="Protein Wnt-11b">
    <location>
        <begin position="23"/>
        <end position="353"/>
    </location>
</feature>
<feature type="modified residue" description="Sulfotyrosine" evidence="27">
    <location>
        <position position="274"/>
    </location>
</feature>
<feature type="modified residue" description="Sulfotyrosine" evidence="27">
    <location>
        <position position="281"/>
    </location>
</feature>
<feature type="lipid moiety-binding region" description="O-palmitoleoyl serine; by PORCN" evidence="3">
    <location>
        <position position="214"/>
    </location>
</feature>
<feature type="glycosylation site" description="N-linked (GlcNAc...) asparagine" evidence="4">
    <location>
        <position position="31"/>
    </location>
</feature>
<feature type="glycosylation site" description="N-linked (GlcNAc...) asparagine" evidence="4">
    <location>
        <position position="38"/>
    </location>
</feature>
<feature type="glycosylation site" description="N-linked (GlcNAc...) asparagine" evidence="27">
    <location>
        <position position="88"/>
    </location>
</feature>
<feature type="glycosylation site" description="N-linked (GlcNAc...) asparagine" evidence="27">
    <location>
        <position position="299"/>
    </location>
</feature>
<feature type="disulfide bond" evidence="2">
    <location>
        <begin position="78"/>
        <end position="89"/>
    </location>
</feature>
<feature type="disulfide bond" evidence="2">
    <location>
        <begin position="128"/>
        <end position="136"/>
    </location>
</feature>
<feature type="disulfide bond" evidence="2">
    <location>
        <begin position="138"/>
        <end position="155"/>
    </location>
</feature>
<feature type="disulfide bond" evidence="2">
    <location>
        <begin position="208"/>
        <end position="222"/>
    </location>
</feature>
<feature type="disulfide bond" evidence="2">
    <location>
        <begin position="210"/>
        <end position="217"/>
    </location>
</feature>
<feature type="disulfide bond" evidence="2">
    <location>
        <begin position="282"/>
        <end position="313"/>
    </location>
</feature>
<feature type="disulfide bond" evidence="2">
    <location>
        <begin position="298"/>
        <end position="308"/>
    </location>
</feature>
<feature type="disulfide bond" evidence="2">
    <location>
        <begin position="312"/>
        <end position="352"/>
    </location>
</feature>
<feature type="disulfide bond" evidence="2">
    <location>
        <begin position="328"/>
        <end position="343"/>
    </location>
</feature>
<feature type="disulfide bond" evidence="2">
    <location>
        <begin position="330"/>
        <end position="340"/>
    </location>
</feature>
<feature type="disulfide bond" evidence="2">
    <location>
        <begin position="335"/>
        <end position="336"/>
    </location>
</feature>
<feature type="mutagenesis site" description="Loss of glycosylation. Prevents secretion. No effect on wnt5a-binding." evidence="27">
    <original>N</original>
    <variation>Q</variation>
    <location>
        <position position="88"/>
    </location>
</feature>
<feature type="mutagenesis site" description="Loss of sulfation. No effect on secretion or homodimerization but severely reduces interaction with wnt5a and canonical Wnt signaling activity; when associated with F-281." evidence="27">
    <original>Y</original>
    <variation>F</variation>
    <location>
        <position position="274"/>
    </location>
</feature>
<feature type="mutagenesis site" description="Loss of sulfation. No effect on secretion or homodimerization but severely reduces interaction with wnt5a and canonical Wnt signaling activity; when associated with F-274." evidence="27">
    <original>Y</original>
    <variation>F</variation>
    <location>
        <position position="281"/>
    </location>
</feature>
<feature type="mutagenesis site" description="Loss of glycosylation. Prevents secretion. No effect on wnt5a-binding." evidence="27">
    <original>N</original>
    <variation>Q</variation>
    <location>
        <position position="299"/>
    </location>
</feature>
<feature type="sequence conflict" description="In Ref. 1; AAA19697." evidence="33" ref="1">
    <original>L</original>
    <variation>H</variation>
    <location>
        <position position="257"/>
    </location>
</feature>
<comment type="function">
    <text evidence="7 8 10 11 13 15 16 17 18 19 20 21 22 23 24 25 26 27 30 31 32">Ligand for the frizzled7 transmembrane receptor. Primarily acts via non-canonical Wnt pathways mediated by either Ca(2+) and PKC, or by JNK and dvl2/dsh. Depending on the cellular context, can also signal via the canonical Wnt pathway mediated by beta-catenin and dvl2/dsh. May also inhibit canonical Wnt signaling. Maternally initiates dorsal/ventral axis formation by a canonical route, which signals via lrp6. In a complex with wnt5a, activates the canonical and non-canonical processes involved in axis formation. In the non-canonical pathway, acts through fzd7/fz7 to induce phosphorylation of dvl2/dsh. Signals through a non-canonical Wnt pathway to regulate convergent extension movements during gastrulation. Interactions with the secreted Wnt antagonist sfrp5 to coordinate foregut development, acting via a non-canonical Wnt pathway whereby sfrp5 restricts wnt11b activity to prevent inappropriate foregut formation. Mediates cardiogenesis via non-canonical Wnt signaling involving JNK-activation and PKC. Acts redundantly with wnt11/wnt11r during pronephros induction.</text>
</comment>
<comment type="subunit">
    <text evidence="10 16 19 20 23 24 27">Homodimer. Secreted homodimers form a complex with wnt5a homodimers; tyrosine sulfation of both wnt11 and wnt5a by tpst1 is required for this interaction. Interacts with the transmembrane receptor fzd7/fz7. Interacts with lrp6 and ryk. Interacts with tdgf1/frl1. Interacts weakly with frzb1 and strongly with frzb2/crescent. Interaction with frzb2/crescent antagonizes wnt11 function in the neuroectoderm, but enhances it in mesodermal tissue.</text>
</comment>
<comment type="subcellular location">
    <subcellularLocation>
        <location evidence="10 24 27 28">Secreted</location>
        <location evidence="10 24 27 28">Extracellular space</location>
        <location evidence="10 24 27 28">Extracellular matrix</location>
    </subcellularLocation>
</comment>
<comment type="tissue specificity">
    <text evidence="5 6 8 11 12 14 15 16 17 19 25 26 29 31">Transcripts are expressed ubiquitously in early oocytes but become vegetally localized during mid-oogenesis then enriched on the dorsal side by the 8 to 16 cell stage. The protein becomes asymmetrically concentrated on the dorsal side by the 64-cell stage. During gastrulation, expressed in the lateral and ventral marginal zone, and during tadpole stages in the somites and first branchial arch. Weakly expressed in the pronephros from at least stage 12.5, with kidney expression increasing until stage 35. Expressed in the prospective posterior gut between stages 13 and 20, and in the deep foregut endoderm. Prior to neural crest cell migration, expressed in a domain flanking the neural crest on the lateral or epidermal side (the opposite side to wnt11/wnt11-r).</text>
</comment>
<comment type="developmental stage">
    <text evidence="31">Expressed both maternally and zygotically in oocytes and embryos through to swimming tadpole stages.</text>
</comment>
<comment type="induction">
    <text evidence="8 9 11 15 22">By t/xbra. By gata4 and gata6. Repressed by zbtb33/kaiso.</text>
</comment>
<comment type="PTM">
    <text evidence="27">Glycosylation is required for protein secretion.</text>
</comment>
<comment type="PTM">
    <text evidence="1 3">Palmitoleoylation is required for efficient binding to frizzled receptors. Depalmitoleoylation leads to Wnt signaling pathway inhibition.</text>
</comment>
<comment type="miscellaneous">
    <text evidence="34 35">Xenopus and other lower vertebrates contain duplicated wnt11 genes resulting from an ancient gene duplication event, but the second copy has since been lost in mammals. This gene was originally called wnt-11 (PubMed:8306880) but was renamed to wnt11b (PubMed:17436276) after the discovery of wnt11r (now called wnt11).</text>
</comment>
<comment type="similarity">
    <text evidence="33">Belongs to the Wnt family.</text>
</comment>
<comment type="caution">
    <text evidence="33">PubMed:11159911 show a lack of role in heart induction but PubMed:12167861 show a role in heart formation; the discrepancy may be due to duplication of Xenopus wnt11 genes.</text>
</comment>
<sequence length="353" mass="38785">MAPTRHWVTPLLLLCCSGICGAIQWLGLTVNGSRVAWNESEHCRLLDGLVPDQSQLCKRNLELMQSVVNAAKQTKLTCQMTLSDMRWNCSSVENAPSFTPDLSKGTRESAFVYALASATLSHTIARACASGELPTCSCGATPAEVPGTGFRWGGCGDNLHYGLNMGSAFVDAPMKSSKSAGTQATKIMNLHNNAVGRQVLMDSLETKCKCHGVSGSCSVKTCWKGLQDLPHIANELKSKYLGATKVIHRQTGTRRQLVPRELDIRPVRESELVYLVSSPDYCTKNPKLGSYGTQDRLCNKTSVGSDSCNLMCCGRGYNAYTETIVERCQCKYHWCCYVMCKKCERTVERYVCK</sequence>
<keyword id="KW-0217">Developmental protein</keyword>
<keyword id="KW-1015">Disulfide bond</keyword>
<keyword id="KW-0272">Extracellular matrix</keyword>
<keyword id="KW-0306">Gastrulation</keyword>
<keyword id="KW-0325">Glycoprotein</keyword>
<keyword id="KW-0449">Lipoprotein</keyword>
<keyword id="KW-1185">Reference proteome</keyword>
<keyword id="KW-0964">Secreted</keyword>
<keyword id="KW-0732">Signal</keyword>
<keyword id="KW-0765">Sulfation</keyword>
<keyword id="KW-0879">Wnt signaling pathway</keyword>